<accession>A4YRL1</accession>
<evidence type="ECO:0000255" key="1">
    <source>
        <dbReference type="HAMAP-Rule" id="MF_00703"/>
    </source>
</evidence>
<evidence type="ECO:0000305" key="2"/>
<organism>
    <name type="scientific">Bradyrhizobium sp. (strain ORS 278)</name>
    <dbReference type="NCBI Taxonomy" id="114615"/>
    <lineage>
        <taxon>Bacteria</taxon>
        <taxon>Pseudomonadati</taxon>
        <taxon>Pseudomonadota</taxon>
        <taxon>Alphaproteobacteria</taxon>
        <taxon>Hyphomicrobiales</taxon>
        <taxon>Nitrobacteraceae</taxon>
        <taxon>Bradyrhizobium</taxon>
    </lineage>
</organism>
<sequence>MSPADTARPQLKIRSVALDTGRENVVVISRRSRALRPEVFSGFSRVELRCNSRTLLATLLITDDDALVGPDEIGLSEPALRRFAEPAGMLATVSPATPPESLEAVRAKIRGETLSDEAIAAVIEDLAHYRYSDMEIAAFLIGSASFMTSGELLALTHAMANAGTQLTWPEPVVVDKHCIGGIPGNRTSMVVVPIVAAHGLTIPKTSSRAITSPAGTADTMEVLARVNVGAEEMKSIVAACNGCVIWGGHVNLSPADDILISVERPLSLDTREQMVASILSKKLAAGSTHLLLDLPVGPTAKLTSGAEAMRLRKLFEFVGDRFGLKVEVITTDGRQPIGHGIGPVLEARDVMAVLGNEPQAPADLREKSLRLAAHLLEYDPKLRGGAGYSRARELLDSGAALKQMQKIIDAQGPSAGRSELGDLAFDVGAASDGVVSAIDCLRLNRLARTAGAPVNKGAGIRLYKKIGDRVDQGEPLYRVFTCDPSEHDLAAAAASANNGYVLDGPNGPH</sequence>
<feature type="chain" id="PRO_0000314698" description="Putative thymidine phosphorylase">
    <location>
        <begin position="1"/>
        <end position="509"/>
    </location>
</feature>
<proteinExistence type="inferred from homology"/>
<comment type="catalytic activity">
    <reaction evidence="1">
        <text>thymidine + phosphate = 2-deoxy-alpha-D-ribose 1-phosphate + thymine</text>
        <dbReference type="Rhea" id="RHEA:16037"/>
        <dbReference type="ChEBI" id="CHEBI:17748"/>
        <dbReference type="ChEBI" id="CHEBI:17821"/>
        <dbReference type="ChEBI" id="CHEBI:43474"/>
        <dbReference type="ChEBI" id="CHEBI:57259"/>
        <dbReference type="EC" id="2.4.2.4"/>
    </reaction>
</comment>
<comment type="similarity">
    <text evidence="1">Belongs to the thymidine/pyrimidine-nucleoside phosphorylase family. Type 2 subfamily.</text>
</comment>
<comment type="sequence caution" evidence="2">
    <conflict type="erroneous initiation">
        <sequence resource="EMBL-CDS" id="CAL76537"/>
    </conflict>
</comment>
<reference key="1">
    <citation type="journal article" date="2007" name="Science">
        <title>Legumes symbioses: absence of nod genes in photosynthetic bradyrhizobia.</title>
        <authorList>
            <person name="Giraud E."/>
            <person name="Moulin L."/>
            <person name="Vallenet D."/>
            <person name="Barbe V."/>
            <person name="Cytryn E."/>
            <person name="Avarre J.-C."/>
            <person name="Jaubert M."/>
            <person name="Simon D."/>
            <person name="Cartieaux F."/>
            <person name="Prin Y."/>
            <person name="Bena G."/>
            <person name="Hannibal L."/>
            <person name="Fardoux J."/>
            <person name="Kojadinovic M."/>
            <person name="Vuillet L."/>
            <person name="Lajus A."/>
            <person name="Cruveiller S."/>
            <person name="Rouy Z."/>
            <person name="Mangenot S."/>
            <person name="Segurens B."/>
            <person name="Dossat C."/>
            <person name="Franck W.L."/>
            <person name="Chang W.-S."/>
            <person name="Saunders E."/>
            <person name="Bruce D."/>
            <person name="Richardson P."/>
            <person name="Normand P."/>
            <person name="Dreyfus B."/>
            <person name="Pignol D."/>
            <person name="Stacey G."/>
            <person name="Emerich D."/>
            <person name="Vermeglio A."/>
            <person name="Medigue C."/>
            <person name="Sadowsky M."/>
        </authorList>
    </citation>
    <scope>NUCLEOTIDE SEQUENCE [LARGE SCALE GENOMIC DNA]</scope>
    <source>
        <strain>ORS 278</strain>
    </source>
</reference>
<gene>
    <name type="ordered locus">BRADO2724</name>
</gene>
<name>TYPH_BRASO</name>
<keyword id="KW-0328">Glycosyltransferase</keyword>
<keyword id="KW-1185">Reference proteome</keyword>
<keyword id="KW-0808">Transferase</keyword>
<dbReference type="EC" id="2.4.2.4" evidence="1"/>
<dbReference type="EMBL" id="CU234118">
    <property type="protein sequence ID" value="CAL76537.1"/>
    <property type="status" value="ALT_INIT"/>
    <property type="molecule type" value="Genomic_DNA"/>
</dbReference>
<dbReference type="RefSeq" id="WP_083795044.1">
    <property type="nucleotide sequence ID" value="NC_009445.1"/>
</dbReference>
<dbReference type="SMR" id="A4YRL1"/>
<dbReference type="STRING" id="114615.BRADO2724"/>
<dbReference type="KEGG" id="bra:BRADO2724"/>
<dbReference type="eggNOG" id="COG0213">
    <property type="taxonomic scope" value="Bacteria"/>
</dbReference>
<dbReference type="HOGENOM" id="CLU_025040_6_0_5"/>
<dbReference type="OrthoDB" id="341217at2"/>
<dbReference type="Proteomes" id="UP000001994">
    <property type="component" value="Chromosome"/>
</dbReference>
<dbReference type="GO" id="GO:0005829">
    <property type="term" value="C:cytosol"/>
    <property type="evidence" value="ECO:0007669"/>
    <property type="project" value="TreeGrafter"/>
</dbReference>
<dbReference type="GO" id="GO:0004645">
    <property type="term" value="F:1,4-alpha-oligoglucan phosphorylase activity"/>
    <property type="evidence" value="ECO:0007669"/>
    <property type="project" value="InterPro"/>
</dbReference>
<dbReference type="GO" id="GO:0009032">
    <property type="term" value="F:thymidine phosphorylase activity"/>
    <property type="evidence" value="ECO:0007669"/>
    <property type="project" value="UniProtKB-UniRule"/>
</dbReference>
<dbReference type="GO" id="GO:0006206">
    <property type="term" value="P:pyrimidine nucleobase metabolic process"/>
    <property type="evidence" value="ECO:0007669"/>
    <property type="project" value="InterPro"/>
</dbReference>
<dbReference type="GO" id="GO:0006213">
    <property type="term" value="P:pyrimidine nucleoside metabolic process"/>
    <property type="evidence" value="ECO:0007669"/>
    <property type="project" value="InterPro"/>
</dbReference>
<dbReference type="Gene3D" id="1.20.970.50">
    <property type="match status" value="1"/>
</dbReference>
<dbReference type="Gene3D" id="3.40.1030.10">
    <property type="entry name" value="Nucleoside phosphorylase/phosphoribosyltransferase catalytic domain"/>
    <property type="match status" value="1"/>
</dbReference>
<dbReference type="Gene3D" id="3.90.1170.30">
    <property type="entry name" value="Pyrimidine nucleoside phosphorylase-like, C-terminal domain"/>
    <property type="match status" value="1"/>
</dbReference>
<dbReference type="HAMAP" id="MF_00703">
    <property type="entry name" value="Thymid_phosp_2"/>
    <property type="match status" value="1"/>
</dbReference>
<dbReference type="InterPro" id="IPR000312">
    <property type="entry name" value="Glycosyl_Trfase_fam3"/>
</dbReference>
<dbReference type="InterPro" id="IPR017459">
    <property type="entry name" value="Glycosyl_Trfase_fam3_N_dom"/>
</dbReference>
<dbReference type="InterPro" id="IPR036320">
    <property type="entry name" value="Glycosyl_Trfase_fam3_N_dom_sf"/>
</dbReference>
<dbReference type="InterPro" id="IPR035902">
    <property type="entry name" value="Nuc_phospho_transferase"/>
</dbReference>
<dbReference type="InterPro" id="IPR036566">
    <property type="entry name" value="PYNP-like_C_sf"/>
</dbReference>
<dbReference type="InterPro" id="IPR013102">
    <property type="entry name" value="PYNP_C"/>
</dbReference>
<dbReference type="InterPro" id="IPR017872">
    <property type="entry name" value="Pyrmidine_PPase_CS"/>
</dbReference>
<dbReference type="InterPro" id="IPR028579">
    <property type="entry name" value="Thym_Pase_Put"/>
</dbReference>
<dbReference type="InterPro" id="IPR013466">
    <property type="entry name" value="Thymidine/AMP_Pase"/>
</dbReference>
<dbReference type="InterPro" id="IPR000053">
    <property type="entry name" value="Thymidine/pyrmidine_PPase"/>
</dbReference>
<dbReference type="NCBIfam" id="TIGR02645">
    <property type="entry name" value="ARCH_P_rylase"/>
    <property type="match status" value="1"/>
</dbReference>
<dbReference type="NCBIfam" id="NF003338">
    <property type="entry name" value="PRK04350.1"/>
    <property type="match status" value="1"/>
</dbReference>
<dbReference type="PANTHER" id="PTHR10515">
    <property type="entry name" value="THYMIDINE PHOSPHORYLASE"/>
    <property type="match status" value="1"/>
</dbReference>
<dbReference type="PANTHER" id="PTHR10515:SF0">
    <property type="entry name" value="THYMIDINE PHOSPHORYLASE"/>
    <property type="match status" value="1"/>
</dbReference>
<dbReference type="Pfam" id="PF02885">
    <property type="entry name" value="Glycos_trans_3N"/>
    <property type="match status" value="1"/>
</dbReference>
<dbReference type="Pfam" id="PF00591">
    <property type="entry name" value="Glycos_transf_3"/>
    <property type="match status" value="1"/>
</dbReference>
<dbReference type="Pfam" id="PF07831">
    <property type="entry name" value="PYNP_C"/>
    <property type="match status" value="1"/>
</dbReference>
<dbReference type="SMART" id="SM00941">
    <property type="entry name" value="PYNP_C"/>
    <property type="match status" value="1"/>
</dbReference>
<dbReference type="SUPFAM" id="SSF52418">
    <property type="entry name" value="Nucleoside phosphorylase/phosphoribosyltransferase catalytic domain"/>
    <property type="match status" value="1"/>
</dbReference>
<dbReference type="SUPFAM" id="SSF47648">
    <property type="entry name" value="Nucleoside phosphorylase/phosphoribosyltransferase N-terminal domain"/>
    <property type="match status" value="1"/>
</dbReference>
<dbReference type="SUPFAM" id="SSF54680">
    <property type="entry name" value="Pyrimidine nucleoside phosphorylase C-terminal domain"/>
    <property type="match status" value="1"/>
</dbReference>
<dbReference type="PROSITE" id="PS00647">
    <property type="entry name" value="THYMID_PHOSPHORYLASE"/>
    <property type="match status" value="1"/>
</dbReference>
<protein>
    <recommendedName>
        <fullName evidence="1">Putative thymidine phosphorylase</fullName>
        <ecNumber evidence="1">2.4.2.4</ecNumber>
    </recommendedName>
    <alternativeName>
        <fullName evidence="1">TdRPase</fullName>
    </alternativeName>
</protein>